<protein>
    <recommendedName>
        <fullName evidence="1">Urease subunit beta</fullName>
        <ecNumber evidence="1">3.5.1.5</ecNumber>
    </recommendedName>
    <alternativeName>
        <fullName evidence="1">Urea amidohydrolase subunit beta</fullName>
    </alternativeName>
</protein>
<reference key="1">
    <citation type="journal article" date="2004" name="Biosci. Biotechnol. Biochem.">
        <title>Ureases of extreme halophiles of the genus Haloarcula with a unique structure of gene cluster.</title>
        <authorList>
            <person name="Mizuki T."/>
            <person name="Kamekura M."/>
            <person name="DasSarma S."/>
            <person name="Fukushima T."/>
            <person name="Usami R."/>
            <person name="Yoshida Y."/>
            <person name="Horikoshi K."/>
        </authorList>
    </citation>
    <scope>NUCLEOTIDE SEQUENCE [GENOMIC DNA]</scope>
    <source>
        <strain>ATCC 43049 / DSM 3752 / JCM 8966 / VKM B-1809</strain>
    </source>
</reference>
<reference key="2">
    <citation type="journal article" date="2004" name="Genome Res.">
        <title>Genome sequence of Haloarcula marismortui: a halophilic archaeon from the Dead Sea.</title>
        <authorList>
            <person name="Baliga N.S."/>
            <person name="Bonneau R."/>
            <person name="Facciotti M.T."/>
            <person name="Pan M."/>
            <person name="Glusman G."/>
            <person name="Deutsch E.W."/>
            <person name="Shannon P."/>
            <person name="Chiu Y."/>
            <person name="Weng R.S."/>
            <person name="Gan R.R."/>
            <person name="Hung P."/>
            <person name="Date S.V."/>
            <person name="Marcotte E."/>
            <person name="Hood L."/>
            <person name="Ng W.V."/>
        </authorList>
    </citation>
    <scope>NUCLEOTIDE SEQUENCE [LARGE SCALE GENOMIC DNA]</scope>
    <source>
        <strain>ATCC 43049 / DSM 3752 / JCM 8966 / VKM B-1809</strain>
        <plasmid>pNG700</plasmid>
    </source>
</reference>
<evidence type="ECO:0000255" key="1">
    <source>
        <dbReference type="HAMAP-Rule" id="MF_01954"/>
    </source>
</evidence>
<evidence type="ECO:0000256" key="2">
    <source>
        <dbReference type="SAM" id="MobiDB-lite"/>
    </source>
</evidence>
<feature type="chain" id="PRO_0000234283" description="Urease subunit beta">
    <location>
        <begin position="1"/>
        <end position="138"/>
    </location>
</feature>
<feature type="region of interest" description="Disordered" evidence="2">
    <location>
        <begin position="115"/>
        <end position="138"/>
    </location>
</feature>
<feature type="compositionally biased region" description="Acidic residues" evidence="2">
    <location>
        <begin position="128"/>
        <end position="138"/>
    </location>
</feature>
<sequence>MSDGLVPGEVIPGEGTVTLNEGRERTEVTVGNTGDRPSQVGSHFHFFEANAALEFDREAAMGMRLNIPAGTAVRFEPGDEQTVELVEIGGKRRAHGMNGLVNGSVDGETGDAVERMRAAGFGDTGEAAPDDGDTESDQ</sequence>
<comment type="catalytic activity">
    <reaction evidence="1">
        <text>urea + 2 H2O + H(+) = hydrogencarbonate + 2 NH4(+)</text>
        <dbReference type="Rhea" id="RHEA:20557"/>
        <dbReference type="ChEBI" id="CHEBI:15377"/>
        <dbReference type="ChEBI" id="CHEBI:15378"/>
        <dbReference type="ChEBI" id="CHEBI:16199"/>
        <dbReference type="ChEBI" id="CHEBI:17544"/>
        <dbReference type="ChEBI" id="CHEBI:28938"/>
        <dbReference type="EC" id="3.5.1.5"/>
    </reaction>
</comment>
<comment type="pathway">
    <text evidence="1">Nitrogen metabolism; urea degradation; CO(2) and NH(3) from urea (urease route): step 1/1.</text>
</comment>
<comment type="subunit">
    <text evidence="1">Heterotrimer of UreA (gamma), UreB (beta) and UreC (alpha) subunits. Three heterotrimers associate to form the active enzyme.</text>
</comment>
<comment type="subcellular location">
    <subcellularLocation>
        <location evidence="1">Cytoplasm</location>
    </subcellularLocation>
</comment>
<comment type="similarity">
    <text evidence="1">Belongs to the urease beta subunit family.</text>
</comment>
<name>URE2_HALMA</name>
<geneLocation type="plasmid">
    <name>pNG700</name>
</geneLocation>
<accession>Q75ZQ6</accession>
<accession>Q5V6L8</accession>
<proteinExistence type="inferred from homology"/>
<keyword id="KW-0963">Cytoplasm</keyword>
<keyword id="KW-0378">Hydrolase</keyword>
<keyword id="KW-0614">Plasmid</keyword>
<keyword id="KW-1185">Reference proteome</keyword>
<gene>
    <name evidence="1" type="primary">ureB</name>
    <name type="ordered locus">pNG7123</name>
</gene>
<organism>
    <name type="scientific">Haloarcula marismortui (strain ATCC 43049 / DSM 3752 / JCM 8966 / VKM B-1809)</name>
    <name type="common">Halobacterium marismortui</name>
    <dbReference type="NCBI Taxonomy" id="272569"/>
    <lineage>
        <taxon>Archaea</taxon>
        <taxon>Methanobacteriati</taxon>
        <taxon>Methanobacteriota</taxon>
        <taxon>Stenosarchaea group</taxon>
        <taxon>Halobacteria</taxon>
        <taxon>Halobacteriales</taxon>
        <taxon>Haloarculaceae</taxon>
        <taxon>Haloarcula</taxon>
    </lineage>
</organism>
<dbReference type="EC" id="3.5.1.5" evidence="1"/>
<dbReference type="EMBL" id="AB119092">
    <property type="protein sequence ID" value="BAC84957.1"/>
    <property type="molecule type" value="Genomic_DNA"/>
</dbReference>
<dbReference type="EMBL" id="AY596296">
    <property type="protein sequence ID" value="AAV44834.1"/>
    <property type="molecule type" value="Genomic_DNA"/>
</dbReference>
<dbReference type="RefSeq" id="WP_011222585.1">
    <property type="nucleotide sequence ID" value="NC_006395.1"/>
</dbReference>
<dbReference type="SMR" id="Q75ZQ6"/>
<dbReference type="EnsemblBacteria" id="AAV44834">
    <property type="protein sequence ID" value="AAV44834"/>
    <property type="gene ID" value="pNG7123"/>
</dbReference>
<dbReference type="GeneID" id="40151395"/>
<dbReference type="KEGG" id="hma:pNG7123"/>
<dbReference type="PATRIC" id="fig|272569.17.peg.566"/>
<dbReference type="HOGENOM" id="CLU_129707_2_1_2"/>
<dbReference type="BRENDA" id="3.5.1.5">
    <property type="organism ID" value="2549"/>
</dbReference>
<dbReference type="UniPathway" id="UPA00258">
    <property type="reaction ID" value="UER00370"/>
</dbReference>
<dbReference type="Proteomes" id="UP000001169">
    <property type="component" value="Plasmid pNG700"/>
</dbReference>
<dbReference type="GO" id="GO:0035550">
    <property type="term" value="C:urease complex"/>
    <property type="evidence" value="ECO:0007669"/>
    <property type="project" value="InterPro"/>
</dbReference>
<dbReference type="GO" id="GO:0009039">
    <property type="term" value="F:urease activity"/>
    <property type="evidence" value="ECO:0007669"/>
    <property type="project" value="UniProtKB-UniRule"/>
</dbReference>
<dbReference type="GO" id="GO:0043419">
    <property type="term" value="P:urea catabolic process"/>
    <property type="evidence" value="ECO:0007669"/>
    <property type="project" value="UniProtKB-UniRule"/>
</dbReference>
<dbReference type="CDD" id="cd00407">
    <property type="entry name" value="Urease_beta"/>
    <property type="match status" value="1"/>
</dbReference>
<dbReference type="FunFam" id="2.10.150.10:FF:000001">
    <property type="entry name" value="Urease subunit beta"/>
    <property type="match status" value="1"/>
</dbReference>
<dbReference type="Gene3D" id="2.10.150.10">
    <property type="entry name" value="Urease, beta subunit"/>
    <property type="match status" value="1"/>
</dbReference>
<dbReference type="HAMAP" id="MF_01954">
    <property type="entry name" value="Urease_beta"/>
    <property type="match status" value="1"/>
</dbReference>
<dbReference type="InterPro" id="IPR002019">
    <property type="entry name" value="Urease_beta-like"/>
</dbReference>
<dbReference type="InterPro" id="IPR036461">
    <property type="entry name" value="Urease_betasu_sf"/>
</dbReference>
<dbReference type="InterPro" id="IPR050069">
    <property type="entry name" value="Urease_subunit"/>
</dbReference>
<dbReference type="NCBIfam" id="NF009682">
    <property type="entry name" value="PRK13203.1"/>
    <property type="match status" value="1"/>
</dbReference>
<dbReference type="NCBIfam" id="TIGR00192">
    <property type="entry name" value="urease_beta"/>
    <property type="match status" value="1"/>
</dbReference>
<dbReference type="PANTHER" id="PTHR33569">
    <property type="entry name" value="UREASE"/>
    <property type="match status" value="1"/>
</dbReference>
<dbReference type="PANTHER" id="PTHR33569:SF1">
    <property type="entry name" value="UREASE"/>
    <property type="match status" value="1"/>
</dbReference>
<dbReference type="Pfam" id="PF00699">
    <property type="entry name" value="Urease_beta"/>
    <property type="match status" value="1"/>
</dbReference>
<dbReference type="SUPFAM" id="SSF51278">
    <property type="entry name" value="Urease, beta-subunit"/>
    <property type="match status" value="1"/>
</dbReference>